<accession>O97711</accession>
<feature type="chain" id="PRO_0000197172" description="Hyaluronan synthase 2">
    <location>
        <begin position="1"/>
        <end position="552"/>
    </location>
</feature>
<feature type="topological domain" description="Cytoplasmic" evidence="3">
    <location>
        <begin position="1"/>
        <end position="11"/>
    </location>
</feature>
<feature type="transmembrane region" description="Helical; Name=1" evidence="3">
    <location>
        <begin position="12"/>
        <end position="32"/>
    </location>
</feature>
<feature type="topological domain" description="Extracellular" evidence="3">
    <location>
        <begin position="33"/>
        <end position="45"/>
    </location>
</feature>
<feature type="transmembrane region" description="Helical; Name=2" evidence="3">
    <location>
        <begin position="46"/>
        <end position="66"/>
    </location>
</feature>
<feature type="topological domain" description="Cytoplasmic" evidence="3">
    <location>
        <begin position="67"/>
        <end position="374"/>
    </location>
</feature>
<feature type="transmembrane region" description="Helical; Name=3" evidence="3">
    <location>
        <begin position="375"/>
        <end position="395"/>
    </location>
</feature>
<feature type="topological domain" description="Extracellular" evidence="3">
    <location>
        <begin position="396"/>
        <end position="402"/>
    </location>
</feature>
<feature type="transmembrane region" description="Helical; Name=4" evidence="3">
    <location>
        <begin position="403"/>
        <end position="423"/>
    </location>
</feature>
<feature type="topological domain" description="Cytoplasmic" evidence="3">
    <location>
        <begin position="424"/>
        <end position="429"/>
    </location>
</feature>
<feature type="transmembrane region" description="Helical; Name=5" evidence="3">
    <location>
        <begin position="430"/>
        <end position="450"/>
    </location>
</feature>
<feature type="topological domain" description="Extracellular" evidence="3">
    <location>
        <begin position="451"/>
        <end position="475"/>
    </location>
</feature>
<feature type="transmembrane region" description="Helical; Name=6" evidence="3">
    <location>
        <begin position="476"/>
        <end position="496"/>
    </location>
</feature>
<feature type="topological domain" description="Cytoplasmic" evidence="3">
    <location>
        <begin position="497"/>
        <end position="510"/>
    </location>
</feature>
<feature type="transmembrane region" description="Helical; Name=7" evidence="3">
    <location>
        <begin position="511"/>
        <end position="531"/>
    </location>
</feature>
<feature type="topological domain" description="Extracellular" evidence="3">
    <location>
        <begin position="532"/>
        <end position="552"/>
    </location>
</feature>
<feature type="modified residue" description="Phosphothreonine" evidence="2">
    <location>
        <position position="110"/>
    </location>
</feature>
<feature type="modified residue" description="Phosphothreonine" evidence="2">
    <location>
        <position position="328"/>
    </location>
</feature>
<feature type="glycosylation site" description="O-linked (GlcNAc) serine" evidence="2">
    <location>
        <position position="221"/>
    </location>
</feature>
<feature type="cross-link" description="Glycyl lysine isopeptide (Lys-Gly) (interchain with G-Cter in ubiquitin)" evidence="2">
    <location>
        <position position="190"/>
    </location>
</feature>
<feature type="sequence conflict" description="In Ref. 2; BAA76547." evidence="5" ref="2">
    <original>T</original>
    <variation>I</variation>
    <location>
        <position position="406"/>
    </location>
</feature>
<feature type="sequence conflict" description="In Ref. 2; BAA76547." evidence="5" ref="2">
    <original>S</original>
    <variation>C</variation>
    <location>
        <position position="425"/>
    </location>
</feature>
<gene>
    <name type="primary">HAS2</name>
</gene>
<protein>
    <recommendedName>
        <fullName>Hyaluronan synthase 2</fullName>
        <ecNumber evidence="2">2.4.1.212</ecNumber>
    </recommendedName>
    <alternativeName>
        <fullName>Hyaluronate synthase 2</fullName>
    </alternativeName>
    <alternativeName>
        <fullName>Hyaluronic acid synthase 2</fullName>
        <shortName>HA synthase 2</shortName>
    </alternativeName>
</protein>
<proteinExistence type="evidence at transcript level"/>
<reference key="1">
    <citation type="submission" date="1998-03" db="EMBL/GenBank/DDBJ databases">
        <title>Hyaluronan synthase is expressed during cumulus-oocyte complex maturation in the cow.</title>
        <authorList>
            <person name="Einspanier R."/>
            <person name="Patzner K."/>
            <person name="Lauer B."/>
            <person name="Berisha B."/>
        </authorList>
    </citation>
    <scope>NUCLEOTIDE SEQUENCE [MRNA]</scope>
</reference>
<reference key="2">
    <citation type="submission" date="1998-09" db="EMBL/GenBank/DDBJ databases">
        <title>HAS2.</title>
        <authorList>
            <person name="Yamashita H."/>
            <person name="Usui T."/>
            <person name="Suzuki K."/>
        </authorList>
    </citation>
    <scope>NUCLEOTIDE SEQUENCE [MRNA] OF 267-469</scope>
</reference>
<reference key="3">
    <citation type="journal article" date="1999" name="Invest. Ophthalmol. Vis. Sci.">
        <title>Hyaluronan synthase expression in bovine eyes.</title>
        <authorList>
            <person name="Usui T."/>
            <person name="Suzuki K."/>
            <person name="Kaji Y."/>
            <person name="Amano S."/>
            <person name="Miyata K."/>
            <person name="Heldin P."/>
            <person name="Yamashita H."/>
        </authorList>
    </citation>
    <scope>TISSUE SPECIFICITY</scope>
</reference>
<evidence type="ECO:0000250" key="1">
    <source>
        <dbReference type="UniProtKB" id="P70312"/>
    </source>
</evidence>
<evidence type="ECO:0000250" key="2">
    <source>
        <dbReference type="UniProtKB" id="Q92819"/>
    </source>
</evidence>
<evidence type="ECO:0000255" key="3"/>
<evidence type="ECO:0000269" key="4">
    <source>
    </source>
</evidence>
<evidence type="ECO:0000305" key="5"/>
<dbReference type="EC" id="2.4.1.212" evidence="2"/>
<dbReference type="EMBL" id="AJ004951">
    <property type="protein sequence ID" value="CAA06239.1"/>
    <property type="molecule type" value="mRNA"/>
</dbReference>
<dbReference type="EMBL" id="AB017804">
    <property type="protein sequence ID" value="BAA76547.1"/>
    <property type="molecule type" value="mRNA"/>
</dbReference>
<dbReference type="RefSeq" id="NP_776504.1">
    <property type="nucleotide sequence ID" value="NM_174079.2"/>
</dbReference>
<dbReference type="SMR" id="O97711"/>
<dbReference type="FunCoup" id="O97711">
    <property type="interactions" value="4"/>
</dbReference>
<dbReference type="STRING" id="9913.ENSBTAP00000026503"/>
<dbReference type="CAZy" id="GT2">
    <property type="family name" value="Glycosyltransferase Family 2"/>
</dbReference>
<dbReference type="GlyCosmos" id="O97711">
    <property type="glycosylation" value="1 site, No reported glycans"/>
</dbReference>
<dbReference type="GlyGen" id="O97711">
    <property type="glycosylation" value="1 site"/>
</dbReference>
<dbReference type="PaxDb" id="9913-ENSBTAP00000026503"/>
<dbReference type="GeneID" id="281220"/>
<dbReference type="KEGG" id="bta:281220"/>
<dbReference type="CTD" id="3037"/>
<dbReference type="eggNOG" id="KOG2571">
    <property type="taxonomic scope" value="Eukaryota"/>
</dbReference>
<dbReference type="InParanoid" id="O97711"/>
<dbReference type="OrthoDB" id="9876900at2759"/>
<dbReference type="UniPathway" id="UPA00341"/>
<dbReference type="Proteomes" id="UP000009136">
    <property type="component" value="Unplaced"/>
</dbReference>
<dbReference type="GO" id="GO:0005789">
    <property type="term" value="C:endoplasmic reticulum membrane"/>
    <property type="evidence" value="ECO:0007669"/>
    <property type="project" value="UniProtKB-SubCell"/>
</dbReference>
<dbReference type="GO" id="GO:1903561">
    <property type="term" value="C:extracellular vesicle"/>
    <property type="evidence" value="ECO:0000250"/>
    <property type="project" value="UniProtKB"/>
</dbReference>
<dbReference type="GO" id="GO:0005794">
    <property type="term" value="C:Golgi apparatus"/>
    <property type="evidence" value="ECO:0000250"/>
    <property type="project" value="UniProtKB"/>
</dbReference>
<dbReference type="GO" id="GO:0000139">
    <property type="term" value="C:Golgi membrane"/>
    <property type="evidence" value="ECO:0007669"/>
    <property type="project" value="UniProtKB-SubCell"/>
</dbReference>
<dbReference type="GO" id="GO:0005764">
    <property type="term" value="C:lysosome"/>
    <property type="evidence" value="ECO:0007669"/>
    <property type="project" value="UniProtKB-SubCell"/>
</dbReference>
<dbReference type="GO" id="GO:0005886">
    <property type="term" value="C:plasma membrane"/>
    <property type="evidence" value="ECO:0000250"/>
    <property type="project" value="UniProtKB"/>
</dbReference>
<dbReference type="GO" id="GO:0050501">
    <property type="term" value="F:hyaluronan synthase activity"/>
    <property type="evidence" value="ECO:0000250"/>
    <property type="project" value="UniProtKB"/>
</dbReference>
<dbReference type="GO" id="GO:0036302">
    <property type="term" value="P:atrioventricular canal development"/>
    <property type="evidence" value="ECO:0000250"/>
    <property type="project" value="UniProtKB"/>
</dbReference>
<dbReference type="GO" id="GO:0090500">
    <property type="term" value="P:endocardial cushion to mesenchymal transition"/>
    <property type="evidence" value="ECO:0000250"/>
    <property type="project" value="UniProtKB"/>
</dbReference>
<dbReference type="GO" id="GO:0085029">
    <property type="term" value="P:extracellular matrix assembly"/>
    <property type="evidence" value="ECO:0000250"/>
    <property type="project" value="UniProtKB"/>
</dbReference>
<dbReference type="GO" id="GO:0030213">
    <property type="term" value="P:hyaluronan biosynthetic process"/>
    <property type="evidence" value="ECO:0000250"/>
    <property type="project" value="UniProtKB"/>
</dbReference>
<dbReference type="GO" id="GO:0000271">
    <property type="term" value="P:polysaccharide biosynthetic process"/>
    <property type="evidence" value="ECO:0000250"/>
    <property type="project" value="UniProtKB"/>
</dbReference>
<dbReference type="GO" id="GO:0035810">
    <property type="term" value="P:positive regulation of urine volume"/>
    <property type="evidence" value="ECO:0000250"/>
    <property type="project" value="UniProtKB"/>
</dbReference>
<dbReference type="GO" id="GO:0070295">
    <property type="term" value="P:renal water absorption"/>
    <property type="evidence" value="ECO:0000250"/>
    <property type="project" value="UniProtKB"/>
</dbReference>
<dbReference type="GO" id="GO:0001570">
    <property type="term" value="P:vasculogenesis"/>
    <property type="evidence" value="ECO:0000250"/>
    <property type="project" value="UniProtKB"/>
</dbReference>
<dbReference type="CDD" id="cd06434">
    <property type="entry name" value="GT2_HAS"/>
    <property type="match status" value="1"/>
</dbReference>
<dbReference type="Gene3D" id="3.90.550.10">
    <property type="entry name" value="Spore Coat Polysaccharide Biosynthesis Protein SpsA, Chain A"/>
    <property type="match status" value="1"/>
</dbReference>
<dbReference type="InterPro" id="IPR029044">
    <property type="entry name" value="Nucleotide-diphossugar_trans"/>
</dbReference>
<dbReference type="PANTHER" id="PTHR22913">
    <property type="entry name" value="HYALURONAN SYNTHASE"/>
    <property type="match status" value="1"/>
</dbReference>
<dbReference type="PANTHER" id="PTHR22913:SF7">
    <property type="entry name" value="HYALURONAN SYNTHASE 2"/>
    <property type="match status" value="1"/>
</dbReference>
<dbReference type="Pfam" id="PF13641">
    <property type="entry name" value="Glyco_tranf_2_3"/>
    <property type="match status" value="1"/>
</dbReference>
<dbReference type="SUPFAM" id="SSF53448">
    <property type="entry name" value="Nucleotide-diphospho-sugar transferases"/>
    <property type="match status" value="1"/>
</dbReference>
<name>HYAS2_BOVIN</name>
<sequence>MHCERFLCILRIIGTTLFGVSLLLGITAAYIVGYQFIQTDNYYFSFGLYGAFLASHLIIQSLFAFLEHRKMKKSLETPIKLNKTVALCIAAYQEDPDYLRKCLQSVKRLTYPGIKVVMVIDGNSEDDLYMMDIFSEVMGRDKSATYIWKNNYHVKGPGETDESHKESSQHVTQLVLSNKSICTMQKWGGKREVMYTAFRALGRSVDYVQVCDSDTMLDPASSVEMVKVLEEDPMVGGVGGDVQILNKYDSWISFLSSVRYWMAFNIERACQSYFGCVQCISGPLGMYRNSLLHEFVEDWYNQEFMGSQCSFGDDRHLTNRVLSLGYATKYTARSKCLTETPIEYLRWLNQQTRWSKSYFREWLYNAMWFHKHHLWMTYEAVITGFFPFFLIATVIQLFYRGKIWNTLLFLLTVQLVGLIKSSFASCLRGNIVMVFMSLYSVLYMSSLLPAKMFAIATINKAGWGTSGRKTIVVNFIGLIPVSVWFTILLGGVIFTIYKESKKPFSESKQTVLIVGTLLYACYWVMLLTLYVVLINKCGRRKKGQQYDMVLDV</sequence>
<keyword id="KW-1003">Cell membrane</keyword>
<keyword id="KW-0256">Endoplasmic reticulum</keyword>
<keyword id="KW-0325">Glycoprotein</keyword>
<keyword id="KW-0328">Glycosyltransferase</keyword>
<keyword id="KW-0333">Golgi apparatus</keyword>
<keyword id="KW-1017">Isopeptide bond</keyword>
<keyword id="KW-0458">Lysosome</keyword>
<keyword id="KW-0472">Membrane</keyword>
<keyword id="KW-0597">Phosphoprotein</keyword>
<keyword id="KW-1185">Reference proteome</keyword>
<keyword id="KW-0808">Transferase</keyword>
<keyword id="KW-0812">Transmembrane</keyword>
<keyword id="KW-1133">Transmembrane helix</keyword>
<keyword id="KW-0832">Ubl conjugation</keyword>
<organism>
    <name type="scientific">Bos taurus</name>
    <name type="common">Bovine</name>
    <dbReference type="NCBI Taxonomy" id="9913"/>
    <lineage>
        <taxon>Eukaryota</taxon>
        <taxon>Metazoa</taxon>
        <taxon>Chordata</taxon>
        <taxon>Craniata</taxon>
        <taxon>Vertebrata</taxon>
        <taxon>Euteleostomi</taxon>
        <taxon>Mammalia</taxon>
        <taxon>Eutheria</taxon>
        <taxon>Laurasiatheria</taxon>
        <taxon>Artiodactyla</taxon>
        <taxon>Ruminantia</taxon>
        <taxon>Pecora</taxon>
        <taxon>Bovidae</taxon>
        <taxon>Bovinae</taxon>
        <taxon>Bos</taxon>
    </lineage>
</organism>
<comment type="function">
    <text evidence="1 2">Catalyzes the addition of GlcNAc or GlcUA monosaccharides to the nascent hyaluronan polymer. Therefore, it is essential to hyaluronan synthesis a major component of most extracellular matrices that has a structural role in tissues architectures and regulates cell adhesion, migration and differentiation (By similarity). This is one of three isoenzymes responsible for cellular hyaluronan synthesis and it is particularly responsible for the synthesis of high molecular mass hyaluronan (By similarity).</text>
</comment>
<comment type="catalytic activity">
    <reaction evidence="2">
        <text>[hyaluronan](n) + UDP-N-acetyl-alpha-D-glucosamine = N-acetyl-beta-D-glucosaminyl-(1-&gt;4)-[hyaluronan](n) + UDP + H(+)</text>
        <dbReference type="Rhea" id="RHEA:20465"/>
        <dbReference type="Rhea" id="RHEA-COMP:12583"/>
        <dbReference type="Rhea" id="RHEA-COMP:12585"/>
        <dbReference type="ChEBI" id="CHEBI:15378"/>
        <dbReference type="ChEBI" id="CHEBI:57705"/>
        <dbReference type="ChEBI" id="CHEBI:58223"/>
        <dbReference type="ChEBI" id="CHEBI:132153"/>
        <dbReference type="ChEBI" id="CHEBI:132154"/>
        <dbReference type="EC" id="2.4.1.212"/>
    </reaction>
    <physiologicalReaction direction="left-to-right" evidence="2">
        <dbReference type="Rhea" id="RHEA:20466"/>
    </physiologicalReaction>
</comment>
<comment type="catalytic activity">
    <reaction evidence="2">
        <text>N-acetyl-beta-D-glucosaminyl-(1-&gt;4)-[hyaluronan](n) + UDP-alpha-D-glucuronate = [hyaluronan](n+1) + UDP + H(+)</text>
        <dbReference type="Rhea" id="RHEA:12528"/>
        <dbReference type="Rhea" id="RHEA-COMP:12585"/>
        <dbReference type="Rhea" id="RHEA-COMP:12587"/>
        <dbReference type="ChEBI" id="CHEBI:15378"/>
        <dbReference type="ChEBI" id="CHEBI:58052"/>
        <dbReference type="ChEBI" id="CHEBI:58223"/>
        <dbReference type="ChEBI" id="CHEBI:132153"/>
        <dbReference type="ChEBI" id="CHEBI:132154"/>
        <dbReference type="EC" id="2.4.1.212"/>
    </reaction>
    <physiologicalReaction direction="left-to-right" evidence="2">
        <dbReference type="Rhea" id="RHEA:12529"/>
    </physiologicalReaction>
</comment>
<comment type="cofactor">
    <cofactor>
        <name>Mg(2+)</name>
        <dbReference type="ChEBI" id="CHEBI:18420"/>
    </cofactor>
</comment>
<comment type="pathway">
    <text evidence="2">Glycan biosynthesis; hyaluronan biosynthesis.</text>
</comment>
<comment type="subunit">
    <text evidence="2">Homodimer; dimerization promotes enzymatic activity. Forms heterodimer with HAS3. Forms heterodimer with HAS1.</text>
</comment>
<comment type="subcellular location">
    <subcellularLocation>
        <location evidence="2">Cell membrane</location>
        <topology evidence="3">Multi-pass membrane protein</topology>
    </subcellularLocation>
    <subcellularLocation>
        <location evidence="2">Endoplasmic reticulum membrane</location>
        <topology evidence="3">Multi-pass membrane protein</topology>
    </subcellularLocation>
    <subcellularLocation>
        <location evidence="2">Vesicle</location>
    </subcellularLocation>
    <subcellularLocation>
        <location evidence="2">Golgi apparatus membrane</location>
        <topology evidence="3">Multi-pass membrane protein</topology>
    </subcellularLocation>
    <subcellularLocation>
        <location evidence="2">Lysosome</location>
    </subcellularLocation>
    <text evidence="2">Travels from endoplasmic reticulum (ER), Golgi to plasma membrane and either back to endosomes and lysosomes, or out into extracellular vesicles. Post-translational modifications control HAS2 trafficking.</text>
</comment>
<comment type="tissue specificity">
    <text evidence="4">Expressed in corneal endothelial cells.</text>
</comment>
<comment type="PTM">
    <text evidence="2">Phosphorylation at Thr-328 is essential for hyaluronan synthase activity.</text>
</comment>
<comment type="PTM">
    <text evidence="2">O-GlcNAcylation at Ser-221 increases the stability of HAS2 and plasma membrane localization.</text>
</comment>
<comment type="PTM">
    <text evidence="2">Ubiquitination at Lys-190; this ubiquitination is essential for hyaluronan synthase activity and homo- or hetero-oligomerization. Can also be poly-ubiquitinated. Deubiquitinated by USP17 and USP4. USP17 efficiently removes 'Lys-63'- and 'Lys-48'-linked polyubiquitin chains, whereas USP4 preferentially removes monoubiquitination and, partially, both 'Lys-63'- and 'Lys-48'-linked polyubiquitin chain.</text>
</comment>
<comment type="similarity">
    <text evidence="5">Belongs to the NodC/HAS family.</text>
</comment>